<reference key="1">
    <citation type="journal article" date="2004" name="Nat. Biotechnol.">
        <title>The genome sequence of the extreme thermophile Thermus thermophilus.</title>
        <authorList>
            <person name="Henne A."/>
            <person name="Brueggemann H."/>
            <person name="Raasch C."/>
            <person name="Wiezer A."/>
            <person name="Hartsch T."/>
            <person name="Liesegang H."/>
            <person name="Johann A."/>
            <person name="Lienard T."/>
            <person name="Gohl O."/>
            <person name="Martinez-Arias R."/>
            <person name="Jacobi C."/>
            <person name="Starkuviene V."/>
            <person name="Schlenczeck S."/>
            <person name="Dencker S."/>
            <person name="Huber R."/>
            <person name="Klenk H.-P."/>
            <person name="Kramer W."/>
            <person name="Merkl R."/>
            <person name="Gottschalk G."/>
            <person name="Fritz H.-J."/>
        </authorList>
    </citation>
    <scope>NUCLEOTIDE SEQUENCE [LARGE SCALE GENOMIC DNA]</scope>
    <source>
        <strain>ATCC BAA-163 / DSM 7039 / HB27</strain>
    </source>
</reference>
<feature type="chain" id="PRO_0000109114" description="UDP-N-acetylmuramoylalanine--D-glutamate ligase">
    <location>
        <begin position="1"/>
        <end position="417"/>
    </location>
</feature>
<feature type="binding site" evidence="1">
    <location>
        <begin position="101"/>
        <end position="107"/>
    </location>
    <ligand>
        <name>ATP</name>
        <dbReference type="ChEBI" id="CHEBI:30616"/>
    </ligand>
</feature>
<evidence type="ECO:0000255" key="1">
    <source>
        <dbReference type="HAMAP-Rule" id="MF_00639"/>
    </source>
</evidence>
<sequence>MRLVYGLGRSGLGVLRFLRKRGLPARFYDDRPREEEVREALALGFQPDWNLEEAYEEVVAAPGVPLDHPHLKRLAARGAKVLGEAELAYRLSPTPIVGITGTAGKTSTTLFTAHLLRAHGLRAREGGNVDPPLVSVVDEAEVAVAELSSFQLERVHAFRPRVAVLLNLGVDHLDRHGTVEAYHAAKLNLLKNLTPEDALVYNRLDPKVRRAAEASPARLYPFTPGSTPRETNLRAALEATRAYLDLLGRPLDPGAVAEALRTLPEAPHRFQAFARKGGVVFIDDSIATRTEAVRAALEAAPAPIAWILGGEDKGADLAPLLPLLGRVRVALALGRDGPRFARALEGRTEVVVIAEKDGRTAMRKAVEEALSRLEQGSVLLAPLAASFDQFRDYKDRAQAFREAVFALGGEPWTPSSS</sequence>
<protein>
    <recommendedName>
        <fullName evidence="1">UDP-N-acetylmuramoylalanine--D-glutamate ligase</fullName>
        <ecNumber evidence="1">6.3.2.9</ecNumber>
    </recommendedName>
    <alternativeName>
        <fullName evidence="1">D-glutamic acid-adding enzyme</fullName>
    </alternativeName>
    <alternativeName>
        <fullName evidence="1">UDP-N-acetylmuramoyl-L-alanyl-D-glutamate synthetase</fullName>
    </alternativeName>
</protein>
<dbReference type="EC" id="6.3.2.9" evidence="1"/>
<dbReference type="EMBL" id="AE017221">
    <property type="protein sequence ID" value="AAS81065.1"/>
    <property type="molecule type" value="Genomic_DNA"/>
</dbReference>
<dbReference type="RefSeq" id="WP_011173156.1">
    <property type="nucleotide sequence ID" value="NC_005835.1"/>
</dbReference>
<dbReference type="SMR" id="Q72JQ1"/>
<dbReference type="GeneID" id="3169030"/>
<dbReference type="KEGG" id="tth:TT_C0717"/>
<dbReference type="eggNOG" id="COG0771">
    <property type="taxonomic scope" value="Bacteria"/>
</dbReference>
<dbReference type="HOGENOM" id="CLU_032540_0_0_0"/>
<dbReference type="OrthoDB" id="9809796at2"/>
<dbReference type="UniPathway" id="UPA00219"/>
<dbReference type="Proteomes" id="UP000000592">
    <property type="component" value="Chromosome"/>
</dbReference>
<dbReference type="GO" id="GO:0005737">
    <property type="term" value="C:cytoplasm"/>
    <property type="evidence" value="ECO:0007669"/>
    <property type="project" value="UniProtKB-SubCell"/>
</dbReference>
<dbReference type="GO" id="GO:0005524">
    <property type="term" value="F:ATP binding"/>
    <property type="evidence" value="ECO:0007669"/>
    <property type="project" value="UniProtKB-UniRule"/>
</dbReference>
<dbReference type="GO" id="GO:0008764">
    <property type="term" value="F:UDP-N-acetylmuramoylalanine-D-glutamate ligase activity"/>
    <property type="evidence" value="ECO:0007669"/>
    <property type="project" value="UniProtKB-UniRule"/>
</dbReference>
<dbReference type="GO" id="GO:0051301">
    <property type="term" value="P:cell division"/>
    <property type="evidence" value="ECO:0007669"/>
    <property type="project" value="UniProtKB-KW"/>
</dbReference>
<dbReference type="GO" id="GO:0071555">
    <property type="term" value="P:cell wall organization"/>
    <property type="evidence" value="ECO:0007669"/>
    <property type="project" value="UniProtKB-KW"/>
</dbReference>
<dbReference type="GO" id="GO:0009252">
    <property type="term" value="P:peptidoglycan biosynthetic process"/>
    <property type="evidence" value="ECO:0007669"/>
    <property type="project" value="UniProtKB-UniRule"/>
</dbReference>
<dbReference type="GO" id="GO:0008360">
    <property type="term" value="P:regulation of cell shape"/>
    <property type="evidence" value="ECO:0007669"/>
    <property type="project" value="UniProtKB-KW"/>
</dbReference>
<dbReference type="Gene3D" id="3.90.190.20">
    <property type="entry name" value="Mur ligase, C-terminal domain"/>
    <property type="match status" value="1"/>
</dbReference>
<dbReference type="Gene3D" id="3.40.1190.10">
    <property type="entry name" value="Mur-like, catalytic domain"/>
    <property type="match status" value="1"/>
</dbReference>
<dbReference type="Gene3D" id="3.40.50.720">
    <property type="entry name" value="NAD(P)-binding Rossmann-like Domain"/>
    <property type="match status" value="1"/>
</dbReference>
<dbReference type="HAMAP" id="MF_00639">
    <property type="entry name" value="MurD"/>
    <property type="match status" value="1"/>
</dbReference>
<dbReference type="InterPro" id="IPR036565">
    <property type="entry name" value="Mur-like_cat_sf"/>
</dbReference>
<dbReference type="InterPro" id="IPR004101">
    <property type="entry name" value="Mur_ligase_C"/>
</dbReference>
<dbReference type="InterPro" id="IPR036615">
    <property type="entry name" value="Mur_ligase_C_dom_sf"/>
</dbReference>
<dbReference type="InterPro" id="IPR013221">
    <property type="entry name" value="Mur_ligase_cen"/>
</dbReference>
<dbReference type="InterPro" id="IPR005762">
    <property type="entry name" value="MurD"/>
</dbReference>
<dbReference type="NCBIfam" id="TIGR01087">
    <property type="entry name" value="murD"/>
    <property type="match status" value="1"/>
</dbReference>
<dbReference type="PANTHER" id="PTHR43692">
    <property type="entry name" value="UDP-N-ACETYLMURAMOYLALANINE--D-GLUTAMATE LIGASE"/>
    <property type="match status" value="1"/>
</dbReference>
<dbReference type="PANTHER" id="PTHR43692:SF1">
    <property type="entry name" value="UDP-N-ACETYLMURAMOYLALANINE--D-GLUTAMATE LIGASE"/>
    <property type="match status" value="1"/>
</dbReference>
<dbReference type="Pfam" id="PF02875">
    <property type="entry name" value="Mur_ligase_C"/>
    <property type="match status" value="1"/>
</dbReference>
<dbReference type="Pfam" id="PF08245">
    <property type="entry name" value="Mur_ligase_M"/>
    <property type="match status" value="1"/>
</dbReference>
<dbReference type="Pfam" id="PF21799">
    <property type="entry name" value="MurD-like_N"/>
    <property type="match status" value="1"/>
</dbReference>
<dbReference type="SUPFAM" id="SSF51984">
    <property type="entry name" value="MurCD N-terminal domain"/>
    <property type="match status" value="1"/>
</dbReference>
<dbReference type="SUPFAM" id="SSF53623">
    <property type="entry name" value="MurD-like peptide ligases, catalytic domain"/>
    <property type="match status" value="1"/>
</dbReference>
<dbReference type="SUPFAM" id="SSF53244">
    <property type="entry name" value="MurD-like peptide ligases, peptide-binding domain"/>
    <property type="match status" value="1"/>
</dbReference>
<name>MURD_THET2</name>
<organism>
    <name type="scientific">Thermus thermophilus (strain ATCC BAA-163 / DSM 7039 / HB27)</name>
    <dbReference type="NCBI Taxonomy" id="262724"/>
    <lineage>
        <taxon>Bacteria</taxon>
        <taxon>Thermotogati</taxon>
        <taxon>Deinococcota</taxon>
        <taxon>Deinococci</taxon>
        <taxon>Thermales</taxon>
        <taxon>Thermaceae</taxon>
        <taxon>Thermus</taxon>
    </lineage>
</organism>
<gene>
    <name evidence="1" type="primary">murD</name>
    <name type="ordered locus">TT_C0717</name>
</gene>
<accession>Q72JQ1</accession>
<keyword id="KW-0067">ATP-binding</keyword>
<keyword id="KW-0131">Cell cycle</keyword>
<keyword id="KW-0132">Cell division</keyword>
<keyword id="KW-0133">Cell shape</keyword>
<keyword id="KW-0961">Cell wall biogenesis/degradation</keyword>
<keyword id="KW-0963">Cytoplasm</keyword>
<keyword id="KW-0436">Ligase</keyword>
<keyword id="KW-0547">Nucleotide-binding</keyword>
<keyword id="KW-0573">Peptidoglycan synthesis</keyword>
<comment type="function">
    <text evidence="1">Cell wall formation. Catalyzes the addition of glutamate to the nucleotide precursor UDP-N-acetylmuramoyl-L-alanine (UMA).</text>
</comment>
<comment type="catalytic activity">
    <reaction evidence="1">
        <text>UDP-N-acetyl-alpha-D-muramoyl-L-alanine + D-glutamate + ATP = UDP-N-acetyl-alpha-D-muramoyl-L-alanyl-D-glutamate + ADP + phosphate + H(+)</text>
        <dbReference type="Rhea" id="RHEA:16429"/>
        <dbReference type="ChEBI" id="CHEBI:15378"/>
        <dbReference type="ChEBI" id="CHEBI:29986"/>
        <dbReference type="ChEBI" id="CHEBI:30616"/>
        <dbReference type="ChEBI" id="CHEBI:43474"/>
        <dbReference type="ChEBI" id="CHEBI:83898"/>
        <dbReference type="ChEBI" id="CHEBI:83900"/>
        <dbReference type="ChEBI" id="CHEBI:456216"/>
        <dbReference type="EC" id="6.3.2.9"/>
    </reaction>
</comment>
<comment type="pathway">
    <text evidence="1">Cell wall biogenesis; peptidoglycan biosynthesis.</text>
</comment>
<comment type="subcellular location">
    <subcellularLocation>
        <location evidence="1">Cytoplasm</location>
    </subcellularLocation>
</comment>
<comment type="similarity">
    <text evidence="1">Belongs to the MurCDEF family.</text>
</comment>
<proteinExistence type="inferred from homology"/>